<proteinExistence type="inferred from homology"/>
<comment type="function">
    <text evidence="1">Located on the platform of the 30S subunit, it bridges several disparate RNA helices of the 16S rRNA. Forms part of the Shine-Dalgarno cleft in the 70S ribosome.</text>
</comment>
<comment type="subunit">
    <text evidence="1">Part of the 30S ribosomal subunit. Interacts with proteins S7 and S18. Binds to IF-3.</text>
</comment>
<comment type="similarity">
    <text evidence="1">Belongs to the universal ribosomal protein uS11 family.</text>
</comment>
<reference key="1">
    <citation type="journal article" date="2006" name="PLoS Biol.">
        <title>Metabolic complementarity and genomics of the dual bacterial symbiosis of sharpshooters.</title>
        <authorList>
            <person name="Wu D."/>
            <person name="Daugherty S.C."/>
            <person name="Van Aken S.E."/>
            <person name="Pai G.H."/>
            <person name="Watkins K.L."/>
            <person name="Khouri H."/>
            <person name="Tallon L.J."/>
            <person name="Zaborsky J.M."/>
            <person name="Dunbar H.E."/>
            <person name="Tran P.L."/>
            <person name="Moran N.A."/>
            <person name="Eisen J.A."/>
        </authorList>
    </citation>
    <scope>NUCLEOTIDE SEQUENCE [LARGE SCALE GENOMIC DNA]</scope>
</reference>
<organism>
    <name type="scientific">Baumannia cicadellinicola subsp. Homalodisca coagulata</name>
    <dbReference type="NCBI Taxonomy" id="374463"/>
    <lineage>
        <taxon>Bacteria</taxon>
        <taxon>Pseudomonadati</taxon>
        <taxon>Pseudomonadota</taxon>
        <taxon>Gammaproteobacteria</taxon>
        <taxon>Candidatus Palibaumannia</taxon>
    </lineage>
</organism>
<name>RS11_BAUCH</name>
<sequence>MAKTILAARKHIKKQVVDGIAHIHASFNNTIVTITDRQGNTLGWATAGNSGFRGSRKSTPFAAQVAAERCAEAVKDYGIKNLEVMVKGPGPGRESTVRALNAAGFRITNITDVTPIPHNGCRPPKKRRV</sequence>
<keyword id="KW-1185">Reference proteome</keyword>
<keyword id="KW-0687">Ribonucleoprotein</keyword>
<keyword id="KW-0689">Ribosomal protein</keyword>
<keyword id="KW-0694">RNA-binding</keyword>
<keyword id="KW-0699">rRNA-binding</keyword>
<feature type="chain" id="PRO_0000294720" description="Small ribosomal subunit protein uS11">
    <location>
        <begin position="1"/>
        <end position="129"/>
    </location>
</feature>
<gene>
    <name evidence="1" type="primary">rpsK</name>
    <name type="ordered locus">BCI_0351</name>
</gene>
<evidence type="ECO:0000255" key="1">
    <source>
        <dbReference type="HAMAP-Rule" id="MF_01310"/>
    </source>
</evidence>
<evidence type="ECO:0000305" key="2"/>
<accession>Q1LTB5</accession>
<dbReference type="EMBL" id="CP000238">
    <property type="protein sequence ID" value="ABF14038.1"/>
    <property type="molecule type" value="Genomic_DNA"/>
</dbReference>
<dbReference type="RefSeq" id="WP_011520532.1">
    <property type="nucleotide sequence ID" value="NC_007984.1"/>
</dbReference>
<dbReference type="SMR" id="Q1LTB5"/>
<dbReference type="STRING" id="374463.BCI_0351"/>
<dbReference type="KEGG" id="bci:BCI_0351"/>
<dbReference type="HOGENOM" id="CLU_072439_5_0_6"/>
<dbReference type="OrthoDB" id="9806415at2"/>
<dbReference type="Proteomes" id="UP000002427">
    <property type="component" value="Chromosome"/>
</dbReference>
<dbReference type="GO" id="GO:1990904">
    <property type="term" value="C:ribonucleoprotein complex"/>
    <property type="evidence" value="ECO:0007669"/>
    <property type="project" value="UniProtKB-KW"/>
</dbReference>
<dbReference type="GO" id="GO:0005840">
    <property type="term" value="C:ribosome"/>
    <property type="evidence" value="ECO:0007669"/>
    <property type="project" value="UniProtKB-KW"/>
</dbReference>
<dbReference type="GO" id="GO:0019843">
    <property type="term" value="F:rRNA binding"/>
    <property type="evidence" value="ECO:0007669"/>
    <property type="project" value="UniProtKB-UniRule"/>
</dbReference>
<dbReference type="GO" id="GO:0003735">
    <property type="term" value="F:structural constituent of ribosome"/>
    <property type="evidence" value="ECO:0007669"/>
    <property type="project" value="InterPro"/>
</dbReference>
<dbReference type="GO" id="GO:0006412">
    <property type="term" value="P:translation"/>
    <property type="evidence" value="ECO:0007669"/>
    <property type="project" value="UniProtKB-UniRule"/>
</dbReference>
<dbReference type="FunFam" id="3.30.420.80:FF:000001">
    <property type="entry name" value="30S ribosomal protein S11"/>
    <property type="match status" value="1"/>
</dbReference>
<dbReference type="Gene3D" id="3.30.420.80">
    <property type="entry name" value="Ribosomal protein S11"/>
    <property type="match status" value="1"/>
</dbReference>
<dbReference type="HAMAP" id="MF_01310">
    <property type="entry name" value="Ribosomal_uS11"/>
    <property type="match status" value="1"/>
</dbReference>
<dbReference type="InterPro" id="IPR001971">
    <property type="entry name" value="Ribosomal_uS11"/>
</dbReference>
<dbReference type="InterPro" id="IPR019981">
    <property type="entry name" value="Ribosomal_uS11_bac-type"/>
</dbReference>
<dbReference type="InterPro" id="IPR018102">
    <property type="entry name" value="Ribosomal_uS11_CS"/>
</dbReference>
<dbReference type="InterPro" id="IPR036967">
    <property type="entry name" value="Ribosomal_uS11_sf"/>
</dbReference>
<dbReference type="NCBIfam" id="NF003698">
    <property type="entry name" value="PRK05309.1"/>
    <property type="match status" value="1"/>
</dbReference>
<dbReference type="NCBIfam" id="TIGR03632">
    <property type="entry name" value="uS11_bact"/>
    <property type="match status" value="1"/>
</dbReference>
<dbReference type="PANTHER" id="PTHR11759">
    <property type="entry name" value="40S RIBOSOMAL PROTEIN S14/30S RIBOSOMAL PROTEIN S11"/>
    <property type="match status" value="1"/>
</dbReference>
<dbReference type="Pfam" id="PF00411">
    <property type="entry name" value="Ribosomal_S11"/>
    <property type="match status" value="1"/>
</dbReference>
<dbReference type="PIRSF" id="PIRSF002131">
    <property type="entry name" value="Ribosomal_S11"/>
    <property type="match status" value="1"/>
</dbReference>
<dbReference type="SUPFAM" id="SSF53137">
    <property type="entry name" value="Translational machinery components"/>
    <property type="match status" value="1"/>
</dbReference>
<dbReference type="PROSITE" id="PS00054">
    <property type="entry name" value="RIBOSOMAL_S11"/>
    <property type="match status" value="1"/>
</dbReference>
<protein>
    <recommendedName>
        <fullName evidence="1">Small ribosomal subunit protein uS11</fullName>
    </recommendedName>
    <alternativeName>
        <fullName evidence="2">30S ribosomal protein S11</fullName>
    </alternativeName>
</protein>